<organism>
    <name type="scientific">Nostoc sp. (strain PCC 7120 / SAG 25.82 / UTEX 2576)</name>
    <dbReference type="NCBI Taxonomy" id="103690"/>
    <lineage>
        <taxon>Bacteria</taxon>
        <taxon>Bacillati</taxon>
        <taxon>Cyanobacteriota</taxon>
        <taxon>Cyanophyceae</taxon>
        <taxon>Nostocales</taxon>
        <taxon>Nostocaceae</taxon>
        <taxon>Nostoc</taxon>
    </lineage>
</organism>
<protein>
    <recommendedName>
        <fullName evidence="1">ATP-dependent Clp protease proteolytic subunit 2</fullName>
        <ecNumber evidence="1">3.4.21.92</ecNumber>
    </recommendedName>
    <alternativeName>
        <fullName evidence="1">Endopeptidase Clp 2</fullName>
    </alternativeName>
</protein>
<keyword id="KW-0963">Cytoplasm</keyword>
<keyword id="KW-0378">Hydrolase</keyword>
<keyword id="KW-0645">Protease</keyword>
<keyword id="KW-1185">Reference proteome</keyword>
<keyword id="KW-0720">Serine protease</keyword>
<reference key="1">
    <citation type="journal article" date="2001" name="DNA Res.">
        <title>Complete genomic sequence of the filamentous nitrogen-fixing cyanobacterium Anabaena sp. strain PCC 7120.</title>
        <authorList>
            <person name="Kaneko T."/>
            <person name="Nakamura Y."/>
            <person name="Wolk C.P."/>
            <person name="Kuritz T."/>
            <person name="Sasamoto S."/>
            <person name="Watanabe A."/>
            <person name="Iriguchi M."/>
            <person name="Ishikawa A."/>
            <person name="Kawashima K."/>
            <person name="Kimura T."/>
            <person name="Kishida Y."/>
            <person name="Kohara M."/>
            <person name="Matsumoto M."/>
            <person name="Matsuno A."/>
            <person name="Muraki A."/>
            <person name="Nakazaki N."/>
            <person name="Shimpo S."/>
            <person name="Sugimoto M."/>
            <person name="Takazawa M."/>
            <person name="Yamada M."/>
            <person name="Yasuda M."/>
            <person name="Tabata S."/>
        </authorList>
    </citation>
    <scope>NUCLEOTIDE SEQUENCE [LARGE SCALE GENOMIC DNA]</scope>
    <source>
        <strain>PCC 7120 / SAG 25.82 / UTEX 2576</strain>
    </source>
</reference>
<name>CLPP2_NOSS1</name>
<dbReference type="EC" id="3.4.21.92" evidence="1"/>
<dbReference type="EMBL" id="BA000019">
    <property type="protein sequence ID" value="BAB75382.1"/>
    <property type="molecule type" value="Genomic_DNA"/>
</dbReference>
<dbReference type="PIR" id="AD2266">
    <property type="entry name" value="AD2266"/>
</dbReference>
<dbReference type="SMR" id="Q8YQX8"/>
<dbReference type="STRING" id="103690.gene:10495725"/>
<dbReference type="MEROPS" id="S14.001"/>
<dbReference type="KEGG" id="ana:alr3683"/>
<dbReference type="eggNOG" id="COG0740">
    <property type="taxonomic scope" value="Bacteria"/>
</dbReference>
<dbReference type="OrthoDB" id="510061at2"/>
<dbReference type="Proteomes" id="UP000002483">
    <property type="component" value="Chromosome"/>
</dbReference>
<dbReference type="GO" id="GO:0005737">
    <property type="term" value="C:cytoplasm"/>
    <property type="evidence" value="ECO:0007669"/>
    <property type="project" value="UniProtKB-SubCell"/>
</dbReference>
<dbReference type="GO" id="GO:0009368">
    <property type="term" value="C:endopeptidase Clp complex"/>
    <property type="evidence" value="ECO:0007669"/>
    <property type="project" value="TreeGrafter"/>
</dbReference>
<dbReference type="GO" id="GO:0004176">
    <property type="term" value="F:ATP-dependent peptidase activity"/>
    <property type="evidence" value="ECO:0007669"/>
    <property type="project" value="InterPro"/>
</dbReference>
<dbReference type="GO" id="GO:0051117">
    <property type="term" value="F:ATPase binding"/>
    <property type="evidence" value="ECO:0007669"/>
    <property type="project" value="TreeGrafter"/>
</dbReference>
<dbReference type="GO" id="GO:0004252">
    <property type="term" value="F:serine-type endopeptidase activity"/>
    <property type="evidence" value="ECO:0007669"/>
    <property type="project" value="UniProtKB-UniRule"/>
</dbReference>
<dbReference type="GO" id="GO:0006515">
    <property type="term" value="P:protein quality control for misfolded or incompletely synthesized proteins"/>
    <property type="evidence" value="ECO:0007669"/>
    <property type="project" value="TreeGrafter"/>
</dbReference>
<dbReference type="CDD" id="cd07017">
    <property type="entry name" value="S14_ClpP_2"/>
    <property type="match status" value="1"/>
</dbReference>
<dbReference type="FunFam" id="3.90.226.10:FF:000001">
    <property type="entry name" value="ATP-dependent Clp protease proteolytic subunit"/>
    <property type="match status" value="1"/>
</dbReference>
<dbReference type="Gene3D" id="3.90.226.10">
    <property type="entry name" value="2-enoyl-CoA Hydratase, Chain A, domain 1"/>
    <property type="match status" value="1"/>
</dbReference>
<dbReference type="HAMAP" id="MF_00444">
    <property type="entry name" value="ClpP"/>
    <property type="match status" value="1"/>
</dbReference>
<dbReference type="InterPro" id="IPR001907">
    <property type="entry name" value="ClpP"/>
</dbReference>
<dbReference type="InterPro" id="IPR029045">
    <property type="entry name" value="ClpP/crotonase-like_dom_sf"/>
</dbReference>
<dbReference type="InterPro" id="IPR023562">
    <property type="entry name" value="ClpP/TepA"/>
</dbReference>
<dbReference type="InterPro" id="IPR033135">
    <property type="entry name" value="ClpP_His_AS"/>
</dbReference>
<dbReference type="InterPro" id="IPR018215">
    <property type="entry name" value="ClpP_Ser_AS"/>
</dbReference>
<dbReference type="NCBIfam" id="TIGR00493">
    <property type="entry name" value="clpP"/>
    <property type="match status" value="1"/>
</dbReference>
<dbReference type="NCBIfam" id="NF001368">
    <property type="entry name" value="PRK00277.1"/>
    <property type="match status" value="1"/>
</dbReference>
<dbReference type="NCBIfam" id="NF009205">
    <property type="entry name" value="PRK12553.1"/>
    <property type="match status" value="1"/>
</dbReference>
<dbReference type="PANTHER" id="PTHR10381">
    <property type="entry name" value="ATP-DEPENDENT CLP PROTEASE PROTEOLYTIC SUBUNIT"/>
    <property type="match status" value="1"/>
</dbReference>
<dbReference type="PANTHER" id="PTHR10381:SF70">
    <property type="entry name" value="ATP-DEPENDENT CLP PROTEASE PROTEOLYTIC SUBUNIT"/>
    <property type="match status" value="1"/>
</dbReference>
<dbReference type="Pfam" id="PF00574">
    <property type="entry name" value="CLP_protease"/>
    <property type="match status" value="1"/>
</dbReference>
<dbReference type="PRINTS" id="PR00127">
    <property type="entry name" value="CLPPROTEASEP"/>
</dbReference>
<dbReference type="SUPFAM" id="SSF52096">
    <property type="entry name" value="ClpP/crotonase"/>
    <property type="match status" value="1"/>
</dbReference>
<dbReference type="PROSITE" id="PS00382">
    <property type="entry name" value="CLP_PROTEASE_HIS"/>
    <property type="match status" value="1"/>
</dbReference>
<dbReference type="PROSITE" id="PS00381">
    <property type="entry name" value="CLP_PROTEASE_SER"/>
    <property type="match status" value="1"/>
</dbReference>
<proteinExistence type="inferred from homology"/>
<feature type="chain" id="PRO_0000179479" description="ATP-dependent Clp protease proteolytic subunit 2">
    <location>
        <begin position="1"/>
        <end position="232"/>
    </location>
</feature>
<feature type="active site" description="Nucleophile" evidence="1">
    <location>
        <position position="124"/>
    </location>
</feature>
<feature type="active site" evidence="1">
    <location>
        <position position="149"/>
    </location>
</feature>
<comment type="function">
    <text evidence="1">Cleaves peptides in various proteins in a process that requires ATP hydrolysis. Has a chymotrypsin-like activity. Plays a major role in the degradation of misfolded proteins.</text>
</comment>
<comment type="catalytic activity">
    <reaction evidence="1">
        <text>Hydrolysis of proteins to small peptides in the presence of ATP and magnesium. alpha-casein is the usual test substrate. In the absence of ATP, only oligopeptides shorter than five residues are hydrolyzed (such as succinyl-Leu-Tyr-|-NHMec, and Leu-Tyr-Leu-|-Tyr-Trp, in which cleavage of the -Tyr-|-Leu- and -Tyr-|-Trp bonds also occurs).</text>
        <dbReference type="EC" id="3.4.21.92"/>
    </reaction>
</comment>
<comment type="subunit">
    <text evidence="1">Fourteen ClpP subunits assemble into 2 heptameric rings which stack back to back to give a disk-like structure with a central cavity, resembling the structure of eukaryotic proteasomes.</text>
</comment>
<comment type="subcellular location">
    <subcellularLocation>
        <location evidence="1">Cytoplasm</location>
    </subcellularLocation>
</comment>
<comment type="similarity">
    <text evidence="1">Belongs to the peptidase S14 family.</text>
</comment>
<sequence length="232" mass="25341">MLVSQSANHSINSLSRFGMSSHLNGIGNIVPMVVEQSGMGERAFDIYSRLLRERIIFLGTPIDDAVANTIVAQLLFLDAEDSEKDIQLYINSPGGSVYAGMAIYDTIQQIRPDVVTICFGLAASMGAFLLTAGTKGKRMSLPDSRIMIHQPLGGAQGQAIDIEIQAREILYIKAQLNQLLANHTGQPLERIEADTDRDFFMSAEEAKNYGLIDQVISRQNLPTAGENVTIVK</sequence>
<accession>Q8YQX8</accession>
<evidence type="ECO:0000255" key="1">
    <source>
        <dbReference type="HAMAP-Rule" id="MF_00444"/>
    </source>
</evidence>
<gene>
    <name evidence="1" type="primary">clpP2</name>
    <name type="ordered locus">alr3683</name>
</gene>